<proteinExistence type="inferred from homology"/>
<name>GMHA_ECO5E</name>
<gene>
    <name evidence="1" type="primary">gmhA</name>
    <name type="ordered locus">ECH74115_0266</name>
</gene>
<protein>
    <recommendedName>
        <fullName evidence="1">Phosphoheptose isomerase</fullName>
        <ecNumber evidence="1">5.3.1.28</ecNumber>
    </recommendedName>
    <alternativeName>
        <fullName evidence="1">Sedoheptulose 7-phosphate isomerase</fullName>
    </alternativeName>
</protein>
<comment type="function">
    <text evidence="1">Catalyzes the isomerization of sedoheptulose 7-phosphate in D-glycero-D-manno-heptose 7-phosphate.</text>
</comment>
<comment type="catalytic activity">
    <reaction evidence="1">
        <text>2 D-sedoheptulose 7-phosphate = D-glycero-alpha-D-manno-heptose 7-phosphate + D-glycero-beta-D-manno-heptose 7-phosphate</text>
        <dbReference type="Rhea" id="RHEA:27489"/>
        <dbReference type="ChEBI" id="CHEBI:57483"/>
        <dbReference type="ChEBI" id="CHEBI:60203"/>
        <dbReference type="ChEBI" id="CHEBI:60204"/>
        <dbReference type="EC" id="5.3.1.28"/>
    </reaction>
</comment>
<comment type="cofactor">
    <cofactor evidence="1">
        <name>Zn(2+)</name>
        <dbReference type="ChEBI" id="CHEBI:29105"/>
    </cofactor>
    <text evidence="1">Binds 1 zinc ion per subunit.</text>
</comment>
<comment type="pathway">
    <text evidence="1">Carbohydrate biosynthesis; D-glycero-D-manno-heptose 7-phosphate biosynthesis; D-glycero-alpha-D-manno-heptose 7-phosphate and D-glycero-beta-D-manno-heptose 7-phosphate from sedoheptulose 7-phosphate: step 1/1.</text>
</comment>
<comment type="subunit">
    <text evidence="1">Homotetramer.</text>
</comment>
<comment type="subcellular location">
    <subcellularLocation>
        <location evidence="1">Cytoplasm</location>
    </subcellularLocation>
</comment>
<comment type="miscellaneous">
    <text evidence="1">The reaction produces a racemic mixture of D-glycero-alpha-D-manno-heptose 7-phosphate and D-glycero-beta-D-manno-heptose 7-phosphate.</text>
</comment>
<comment type="similarity">
    <text evidence="1">Belongs to the SIS family. GmhA subfamily.</text>
</comment>
<dbReference type="EC" id="5.3.1.28" evidence="1"/>
<dbReference type="EMBL" id="CP001164">
    <property type="protein sequence ID" value="ACI36072.1"/>
    <property type="molecule type" value="Genomic_DNA"/>
</dbReference>
<dbReference type="SMR" id="B5Z0M1"/>
<dbReference type="KEGG" id="ecf:ECH74115_0266"/>
<dbReference type="HOGENOM" id="CLU_080999_4_0_6"/>
<dbReference type="UniPathway" id="UPA00041">
    <property type="reaction ID" value="UER00436"/>
</dbReference>
<dbReference type="GO" id="GO:0005737">
    <property type="term" value="C:cytoplasm"/>
    <property type="evidence" value="ECO:0007669"/>
    <property type="project" value="UniProtKB-SubCell"/>
</dbReference>
<dbReference type="GO" id="GO:0097367">
    <property type="term" value="F:carbohydrate derivative binding"/>
    <property type="evidence" value="ECO:0007669"/>
    <property type="project" value="InterPro"/>
</dbReference>
<dbReference type="GO" id="GO:0008968">
    <property type="term" value="F:D-sedoheptulose 7-phosphate isomerase activity"/>
    <property type="evidence" value="ECO:0007669"/>
    <property type="project" value="UniProtKB-UniRule"/>
</dbReference>
<dbReference type="GO" id="GO:0008270">
    <property type="term" value="F:zinc ion binding"/>
    <property type="evidence" value="ECO:0007669"/>
    <property type="project" value="UniProtKB-UniRule"/>
</dbReference>
<dbReference type="GO" id="GO:0005975">
    <property type="term" value="P:carbohydrate metabolic process"/>
    <property type="evidence" value="ECO:0007669"/>
    <property type="project" value="UniProtKB-UniRule"/>
</dbReference>
<dbReference type="GO" id="GO:2001061">
    <property type="term" value="P:D-glycero-D-manno-heptose 7-phosphate biosynthetic process"/>
    <property type="evidence" value="ECO:0007669"/>
    <property type="project" value="UniProtKB-UniPathway"/>
</dbReference>
<dbReference type="CDD" id="cd05006">
    <property type="entry name" value="SIS_GmhA"/>
    <property type="match status" value="1"/>
</dbReference>
<dbReference type="FunFam" id="3.40.50.10490:FF:000013">
    <property type="entry name" value="Phosphoheptose isomerase"/>
    <property type="match status" value="1"/>
</dbReference>
<dbReference type="Gene3D" id="3.40.50.10490">
    <property type="entry name" value="Glucose-6-phosphate isomerase like protein, domain 1"/>
    <property type="match status" value="1"/>
</dbReference>
<dbReference type="HAMAP" id="MF_00067">
    <property type="entry name" value="GmhA"/>
    <property type="match status" value="1"/>
</dbReference>
<dbReference type="InterPro" id="IPR035461">
    <property type="entry name" value="GmhA/DiaA"/>
</dbReference>
<dbReference type="InterPro" id="IPR004515">
    <property type="entry name" value="Phosphoheptose_Isoase"/>
</dbReference>
<dbReference type="InterPro" id="IPR001347">
    <property type="entry name" value="SIS_dom"/>
</dbReference>
<dbReference type="InterPro" id="IPR046348">
    <property type="entry name" value="SIS_dom_sf"/>
</dbReference>
<dbReference type="InterPro" id="IPR050099">
    <property type="entry name" value="SIS_GmhA/DiaA_subfam"/>
</dbReference>
<dbReference type="NCBIfam" id="TIGR00441">
    <property type="entry name" value="gmhA"/>
    <property type="match status" value="1"/>
</dbReference>
<dbReference type="NCBIfam" id="NF001628">
    <property type="entry name" value="PRK00414.1"/>
    <property type="match status" value="1"/>
</dbReference>
<dbReference type="PANTHER" id="PTHR30390:SF7">
    <property type="entry name" value="PHOSPHOHEPTOSE ISOMERASE"/>
    <property type="match status" value="1"/>
</dbReference>
<dbReference type="PANTHER" id="PTHR30390">
    <property type="entry name" value="SEDOHEPTULOSE 7-PHOSPHATE ISOMERASE / DNAA INITIATOR-ASSOCIATING FACTOR FOR REPLICATION INITIATION"/>
    <property type="match status" value="1"/>
</dbReference>
<dbReference type="Pfam" id="PF13580">
    <property type="entry name" value="SIS_2"/>
    <property type="match status" value="1"/>
</dbReference>
<dbReference type="SUPFAM" id="SSF53697">
    <property type="entry name" value="SIS domain"/>
    <property type="match status" value="1"/>
</dbReference>
<dbReference type="PROSITE" id="PS51464">
    <property type="entry name" value="SIS"/>
    <property type="match status" value="1"/>
</dbReference>
<reference key="1">
    <citation type="journal article" date="2011" name="Proc. Natl. Acad. Sci. U.S.A.">
        <title>Genomic anatomy of Escherichia coli O157:H7 outbreaks.</title>
        <authorList>
            <person name="Eppinger M."/>
            <person name="Mammel M.K."/>
            <person name="Leclerc J.E."/>
            <person name="Ravel J."/>
            <person name="Cebula T.A."/>
        </authorList>
    </citation>
    <scope>NUCLEOTIDE SEQUENCE [LARGE SCALE GENOMIC DNA]</scope>
    <source>
        <strain>EC4115 / EHEC</strain>
    </source>
</reference>
<sequence length="192" mass="20815">MYQDLIRNELNEAAETLANFLKDDANIHAIQRAAVLLADSFKAGGKVLSCGNGGSHCDAMHFAEELTGRYRENRPGYPAIAISDVSHISCVGNDFGFNDIFSRYVEAVGREGDVLLGISTSGNSANVIKAIAAAREKGMKVITLTGKDGGKMAGTADIEIRVPHFGYADRIQEIHIKVIHILIQLIEKEMVK</sequence>
<accession>B5Z0M1</accession>
<organism>
    <name type="scientific">Escherichia coli O157:H7 (strain EC4115 / EHEC)</name>
    <dbReference type="NCBI Taxonomy" id="444450"/>
    <lineage>
        <taxon>Bacteria</taxon>
        <taxon>Pseudomonadati</taxon>
        <taxon>Pseudomonadota</taxon>
        <taxon>Gammaproteobacteria</taxon>
        <taxon>Enterobacterales</taxon>
        <taxon>Enterobacteriaceae</taxon>
        <taxon>Escherichia</taxon>
    </lineage>
</organism>
<evidence type="ECO:0000255" key="1">
    <source>
        <dbReference type="HAMAP-Rule" id="MF_00067"/>
    </source>
</evidence>
<feature type="chain" id="PRO_1000092270" description="Phosphoheptose isomerase">
    <location>
        <begin position="1"/>
        <end position="192"/>
    </location>
</feature>
<feature type="domain" description="SIS" evidence="1">
    <location>
        <begin position="37"/>
        <end position="192"/>
    </location>
</feature>
<feature type="binding site" evidence="1">
    <location>
        <begin position="52"/>
        <end position="54"/>
    </location>
    <ligand>
        <name>substrate</name>
    </ligand>
</feature>
<feature type="binding site" evidence="1">
    <location>
        <position position="61"/>
    </location>
    <ligand>
        <name>Zn(2+)</name>
        <dbReference type="ChEBI" id="CHEBI:29105"/>
    </ligand>
</feature>
<feature type="binding site" evidence="1">
    <location>
        <position position="65"/>
    </location>
    <ligand>
        <name>substrate</name>
    </ligand>
</feature>
<feature type="binding site" evidence="1">
    <location>
        <position position="65"/>
    </location>
    <ligand>
        <name>Zn(2+)</name>
        <dbReference type="ChEBI" id="CHEBI:29105"/>
    </ligand>
</feature>
<feature type="binding site" evidence="1">
    <location>
        <begin position="93"/>
        <end position="94"/>
    </location>
    <ligand>
        <name>substrate</name>
    </ligand>
</feature>
<feature type="binding site" evidence="1">
    <location>
        <begin position="119"/>
        <end position="121"/>
    </location>
    <ligand>
        <name>substrate</name>
    </ligand>
</feature>
<feature type="binding site" evidence="1">
    <location>
        <position position="124"/>
    </location>
    <ligand>
        <name>substrate</name>
    </ligand>
</feature>
<feature type="binding site" evidence="1">
    <location>
        <position position="172"/>
    </location>
    <ligand>
        <name>substrate</name>
    </ligand>
</feature>
<feature type="binding site" evidence="1">
    <location>
        <position position="172"/>
    </location>
    <ligand>
        <name>Zn(2+)</name>
        <dbReference type="ChEBI" id="CHEBI:29105"/>
    </ligand>
</feature>
<feature type="binding site" evidence="1">
    <location>
        <position position="180"/>
    </location>
    <ligand>
        <name>Zn(2+)</name>
        <dbReference type="ChEBI" id="CHEBI:29105"/>
    </ligand>
</feature>
<keyword id="KW-0119">Carbohydrate metabolism</keyword>
<keyword id="KW-0963">Cytoplasm</keyword>
<keyword id="KW-0413">Isomerase</keyword>
<keyword id="KW-0479">Metal-binding</keyword>
<keyword id="KW-0862">Zinc</keyword>